<accession>Q96DM1</accession>
<accession>A1L487</accession>
<accession>A8K0C6</accession>
<accession>Q8N9E8</accession>
<evidence type="ECO:0000256" key="1">
    <source>
        <dbReference type="SAM" id="MobiDB-lite"/>
    </source>
</evidence>
<evidence type="ECO:0000305" key="2"/>
<sequence>MSNPRKRSIPMRDSNTGLEQLLAEDSFDESDFSEIDDSDNFSDSALEADKIRPLSHLESDGKSSTSSDSGRSMKWSARAMIPRQRYDFTGTPGRKVDVSDITDPLQYFELFFTEELVSKITRETNAQAALLASKPPGPKGFSRMDKWKDTDNDELKVFFAVMLLQGIVQKPELEMFWSTRPLLDTPYLRQIMTGERFLLLFRCLHFVNNSSISAGQSKAQISLQKIKPVFDFLVNKFSTVYTPNRNIAVDESLMLFKGPLAMKQYLPTKRVRFGLKLYVLCESQSGYVWNALVHTGPGMNLKDSADGLKSSRIVLTLVNDLLGQGYCVFLDNFNISPMLFRELHQNRTDAVGTARLNRKQIPNDLKKRIAKGTTVARFCGELMALKWCDGKEVTMLSTFHNDTVIEVNNRNGKKTKRPRVIVDYNENMGAVDSADQMLTSYPSERKRHKVWYKKFFHHLLHITVLNSYILFKKDNPEHTMSHINFRLALIERMLEKHHKPGQQHLRGRPCSDDVTPLRLSGRHFPKSIPATSGKQNPTGRCKICCSQYDKDGKKIRKETRYFCAECDVPLCVVPCFEIYHTKKNY</sequence>
<reference key="1">
    <citation type="journal article" date="2004" name="Nat. Genet.">
        <title>Complete sequencing and characterization of 21,243 full-length human cDNAs.</title>
        <authorList>
            <person name="Ota T."/>
            <person name="Suzuki Y."/>
            <person name="Nishikawa T."/>
            <person name="Otsuki T."/>
            <person name="Sugiyama T."/>
            <person name="Irie R."/>
            <person name="Wakamatsu A."/>
            <person name="Hayashi K."/>
            <person name="Sato H."/>
            <person name="Nagai K."/>
            <person name="Kimura K."/>
            <person name="Makita H."/>
            <person name="Sekine M."/>
            <person name="Obayashi M."/>
            <person name="Nishi T."/>
            <person name="Shibahara T."/>
            <person name="Tanaka T."/>
            <person name="Ishii S."/>
            <person name="Yamamoto J."/>
            <person name="Saito K."/>
            <person name="Kawai Y."/>
            <person name="Isono Y."/>
            <person name="Nakamura Y."/>
            <person name="Nagahari K."/>
            <person name="Murakami K."/>
            <person name="Yasuda T."/>
            <person name="Iwayanagi T."/>
            <person name="Wagatsuma M."/>
            <person name="Shiratori A."/>
            <person name="Sudo H."/>
            <person name="Hosoiri T."/>
            <person name="Kaku Y."/>
            <person name="Kodaira H."/>
            <person name="Kondo H."/>
            <person name="Sugawara M."/>
            <person name="Takahashi M."/>
            <person name="Kanda K."/>
            <person name="Yokoi T."/>
            <person name="Furuya T."/>
            <person name="Kikkawa E."/>
            <person name="Omura Y."/>
            <person name="Abe K."/>
            <person name="Kamihara K."/>
            <person name="Katsuta N."/>
            <person name="Sato K."/>
            <person name="Tanikawa M."/>
            <person name="Yamazaki M."/>
            <person name="Ninomiya K."/>
            <person name="Ishibashi T."/>
            <person name="Yamashita H."/>
            <person name="Murakawa K."/>
            <person name="Fujimori K."/>
            <person name="Tanai H."/>
            <person name="Kimata M."/>
            <person name="Watanabe M."/>
            <person name="Hiraoka S."/>
            <person name="Chiba Y."/>
            <person name="Ishida S."/>
            <person name="Ono Y."/>
            <person name="Takiguchi S."/>
            <person name="Watanabe S."/>
            <person name="Yosida M."/>
            <person name="Hotuta T."/>
            <person name="Kusano J."/>
            <person name="Kanehori K."/>
            <person name="Takahashi-Fujii A."/>
            <person name="Hara H."/>
            <person name="Tanase T.-O."/>
            <person name="Nomura Y."/>
            <person name="Togiya S."/>
            <person name="Komai F."/>
            <person name="Hara R."/>
            <person name="Takeuchi K."/>
            <person name="Arita M."/>
            <person name="Imose N."/>
            <person name="Musashino K."/>
            <person name="Yuuki H."/>
            <person name="Oshima A."/>
            <person name="Sasaki N."/>
            <person name="Aotsuka S."/>
            <person name="Yoshikawa Y."/>
            <person name="Matsunawa H."/>
            <person name="Ichihara T."/>
            <person name="Shiohata N."/>
            <person name="Sano S."/>
            <person name="Moriya S."/>
            <person name="Momiyama H."/>
            <person name="Satoh N."/>
            <person name="Takami S."/>
            <person name="Terashima Y."/>
            <person name="Suzuki O."/>
            <person name="Nakagawa S."/>
            <person name="Senoh A."/>
            <person name="Mizoguchi H."/>
            <person name="Goto Y."/>
            <person name="Shimizu F."/>
            <person name="Wakebe H."/>
            <person name="Hishigaki H."/>
            <person name="Watanabe T."/>
            <person name="Sugiyama A."/>
            <person name="Takemoto M."/>
            <person name="Kawakami B."/>
            <person name="Yamazaki M."/>
            <person name="Watanabe K."/>
            <person name="Kumagai A."/>
            <person name="Itakura S."/>
            <person name="Fukuzumi Y."/>
            <person name="Fujimori Y."/>
            <person name="Komiyama M."/>
            <person name="Tashiro H."/>
            <person name="Tanigami A."/>
            <person name="Fujiwara T."/>
            <person name="Ono T."/>
            <person name="Yamada K."/>
            <person name="Fujii Y."/>
            <person name="Ozaki K."/>
            <person name="Hirao M."/>
            <person name="Ohmori Y."/>
            <person name="Kawabata A."/>
            <person name="Hikiji T."/>
            <person name="Kobatake N."/>
            <person name="Inagaki H."/>
            <person name="Ikema Y."/>
            <person name="Okamoto S."/>
            <person name="Okitani R."/>
            <person name="Kawakami T."/>
            <person name="Noguchi S."/>
            <person name="Itoh T."/>
            <person name="Shigeta K."/>
            <person name="Senba T."/>
            <person name="Matsumura K."/>
            <person name="Nakajima Y."/>
            <person name="Mizuno T."/>
            <person name="Morinaga M."/>
            <person name="Sasaki M."/>
            <person name="Togashi T."/>
            <person name="Oyama M."/>
            <person name="Hata H."/>
            <person name="Watanabe M."/>
            <person name="Komatsu T."/>
            <person name="Mizushima-Sugano J."/>
            <person name="Satoh T."/>
            <person name="Shirai Y."/>
            <person name="Takahashi Y."/>
            <person name="Nakagawa K."/>
            <person name="Okumura K."/>
            <person name="Nagase T."/>
            <person name="Nomura N."/>
            <person name="Kikuchi H."/>
            <person name="Masuho Y."/>
            <person name="Yamashita R."/>
            <person name="Nakai K."/>
            <person name="Yada T."/>
            <person name="Nakamura Y."/>
            <person name="Ohara O."/>
            <person name="Isogai T."/>
            <person name="Sugano S."/>
        </authorList>
    </citation>
    <scope>NUCLEOTIDE SEQUENCE [LARGE SCALE MRNA]</scope>
    <source>
        <tissue>Brain</tissue>
        <tissue>Cerebellum</tissue>
        <tissue>Synovial cell</tissue>
    </source>
</reference>
<reference key="2">
    <citation type="journal article" date="2006" name="Nature">
        <title>Analysis of the DNA sequence and duplication history of human chromosome 15.</title>
        <authorList>
            <person name="Zody M.C."/>
            <person name="Garber M."/>
            <person name="Sharpe T."/>
            <person name="Young S.K."/>
            <person name="Rowen L."/>
            <person name="O'Neill K."/>
            <person name="Whittaker C.A."/>
            <person name="Kamal M."/>
            <person name="Chang J.L."/>
            <person name="Cuomo C.A."/>
            <person name="Dewar K."/>
            <person name="FitzGerald M.G."/>
            <person name="Kodira C.D."/>
            <person name="Madan A."/>
            <person name="Qin S."/>
            <person name="Yang X."/>
            <person name="Abbasi N."/>
            <person name="Abouelleil A."/>
            <person name="Arachchi H.M."/>
            <person name="Baradarani L."/>
            <person name="Birditt B."/>
            <person name="Bloom S."/>
            <person name="Bloom T."/>
            <person name="Borowsky M.L."/>
            <person name="Burke J."/>
            <person name="Butler J."/>
            <person name="Cook A."/>
            <person name="DeArellano K."/>
            <person name="DeCaprio D."/>
            <person name="Dorris L. III"/>
            <person name="Dors M."/>
            <person name="Eichler E.E."/>
            <person name="Engels R."/>
            <person name="Fahey J."/>
            <person name="Fleetwood P."/>
            <person name="Friedman C."/>
            <person name="Gearin G."/>
            <person name="Hall J.L."/>
            <person name="Hensley G."/>
            <person name="Johnson E."/>
            <person name="Jones C."/>
            <person name="Kamat A."/>
            <person name="Kaur A."/>
            <person name="Locke D.P."/>
            <person name="Madan A."/>
            <person name="Munson G."/>
            <person name="Jaffe D.B."/>
            <person name="Lui A."/>
            <person name="Macdonald P."/>
            <person name="Mauceli E."/>
            <person name="Naylor J.W."/>
            <person name="Nesbitt R."/>
            <person name="Nicol R."/>
            <person name="O'Leary S.B."/>
            <person name="Ratcliffe A."/>
            <person name="Rounsley S."/>
            <person name="She X."/>
            <person name="Sneddon K.M.B."/>
            <person name="Stewart S."/>
            <person name="Sougnez C."/>
            <person name="Stone S.M."/>
            <person name="Topham K."/>
            <person name="Vincent D."/>
            <person name="Wang S."/>
            <person name="Zimmer A.R."/>
            <person name="Birren B.W."/>
            <person name="Hood L."/>
            <person name="Lander E.S."/>
            <person name="Nusbaum C."/>
        </authorList>
    </citation>
    <scope>NUCLEOTIDE SEQUENCE [LARGE SCALE GENOMIC DNA]</scope>
</reference>
<proteinExistence type="evidence at protein level"/>
<keyword id="KW-1267">Proteomics identification</keyword>
<keyword id="KW-1185">Reference proteome</keyword>
<feature type="chain" id="PRO_0000288055" description="PiggyBac transposable element-derived protein 4">
    <location>
        <begin position="1"/>
        <end position="585"/>
    </location>
</feature>
<feature type="region of interest" description="Disordered" evidence="1">
    <location>
        <begin position="1"/>
        <end position="73"/>
    </location>
</feature>
<feature type="compositionally biased region" description="Acidic residues" evidence="1">
    <location>
        <begin position="25"/>
        <end position="40"/>
    </location>
</feature>
<feature type="compositionally biased region" description="Basic and acidic residues" evidence="1">
    <location>
        <begin position="47"/>
        <end position="61"/>
    </location>
</feature>
<feature type="compositionally biased region" description="Low complexity" evidence="1">
    <location>
        <begin position="62"/>
        <end position="72"/>
    </location>
</feature>
<feature type="sequence conflict" description="In Ref. 1; BAF82180." evidence="2" ref="1">
    <original>T</original>
    <variation>I</variation>
    <location>
        <position position="113"/>
    </location>
</feature>
<feature type="sequence conflict" description="In Ref. 1; BAB71379." evidence="2" ref="1">
    <original>K</original>
    <variation>E</variation>
    <location>
        <position position="473"/>
    </location>
</feature>
<feature type="sequence conflict" description="In Ref. 1; BAB71379." evidence="2" ref="1">
    <original>K</original>
    <variation>R</variation>
    <location>
        <position position="554"/>
    </location>
</feature>
<feature type="sequence conflict" description="In Ref. 1; BAF82180." evidence="2" ref="1">
    <original>R</original>
    <variation>Q</variation>
    <location>
        <position position="556"/>
    </location>
</feature>
<organism>
    <name type="scientific">Homo sapiens</name>
    <name type="common">Human</name>
    <dbReference type="NCBI Taxonomy" id="9606"/>
    <lineage>
        <taxon>Eukaryota</taxon>
        <taxon>Metazoa</taxon>
        <taxon>Chordata</taxon>
        <taxon>Craniata</taxon>
        <taxon>Vertebrata</taxon>
        <taxon>Euteleostomi</taxon>
        <taxon>Mammalia</taxon>
        <taxon>Eutheria</taxon>
        <taxon>Euarchontoglires</taxon>
        <taxon>Primates</taxon>
        <taxon>Haplorrhini</taxon>
        <taxon>Catarrhini</taxon>
        <taxon>Hominidae</taxon>
        <taxon>Homo</taxon>
    </lineage>
</organism>
<gene>
    <name type="primary">PGBD4</name>
</gene>
<comment type="sequence caution" evidence="2">
    <conflict type="erroneous initiation">
        <sequence resource="EMBL-CDS" id="BAC04428"/>
    </conflict>
</comment>
<name>PGBD4_HUMAN</name>
<protein>
    <recommendedName>
        <fullName>PiggyBac transposable element-derived protein 4</fullName>
    </recommendedName>
</protein>
<dbReference type="EMBL" id="AK057200">
    <property type="protein sequence ID" value="BAB71379.1"/>
    <property type="molecule type" value="mRNA"/>
</dbReference>
<dbReference type="EMBL" id="AK094816">
    <property type="protein sequence ID" value="BAC04428.1"/>
    <property type="status" value="ALT_INIT"/>
    <property type="molecule type" value="mRNA"/>
</dbReference>
<dbReference type="EMBL" id="AK289491">
    <property type="protein sequence ID" value="BAF82180.1"/>
    <property type="molecule type" value="mRNA"/>
</dbReference>
<dbReference type="EMBL" id="AC079203">
    <property type="status" value="NOT_ANNOTATED_CDS"/>
    <property type="molecule type" value="Genomic_DNA"/>
</dbReference>
<dbReference type="CCDS" id="CCDS10033.1"/>
<dbReference type="RefSeq" id="NP_689808.2">
    <property type="nucleotide sequence ID" value="NM_152595.4"/>
</dbReference>
<dbReference type="SMR" id="Q96DM1"/>
<dbReference type="BioGRID" id="127802">
    <property type="interactions" value="2"/>
</dbReference>
<dbReference type="FunCoup" id="Q96DM1">
    <property type="interactions" value="32"/>
</dbReference>
<dbReference type="IntAct" id="Q96DM1">
    <property type="interactions" value="1"/>
</dbReference>
<dbReference type="STRING" id="9606.ENSP00000380872"/>
<dbReference type="GlyGen" id="Q96DM1">
    <property type="glycosylation" value="1 site, 1 O-linked glycan (1 site)"/>
</dbReference>
<dbReference type="iPTMnet" id="Q96DM1"/>
<dbReference type="PhosphoSitePlus" id="Q96DM1"/>
<dbReference type="BioMuta" id="PGBD4"/>
<dbReference type="DMDM" id="269849663"/>
<dbReference type="MassIVE" id="Q96DM1"/>
<dbReference type="PaxDb" id="9606-ENSP00000380872"/>
<dbReference type="PeptideAtlas" id="Q96DM1"/>
<dbReference type="Antibodypedia" id="51724">
    <property type="antibodies" value="33 antibodies from 14 providers"/>
</dbReference>
<dbReference type="DNASU" id="161779"/>
<dbReference type="Ensembl" id="ENST00000397766.4">
    <property type="protein sequence ID" value="ENSP00000380872.2"/>
    <property type="gene ID" value="ENSG00000182405.6"/>
</dbReference>
<dbReference type="GeneID" id="161779"/>
<dbReference type="KEGG" id="hsa:161779"/>
<dbReference type="MANE-Select" id="ENST00000397766.4">
    <property type="protein sequence ID" value="ENSP00000380872.2"/>
    <property type="RefSeq nucleotide sequence ID" value="NM_152595.5"/>
    <property type="RefSeq protein sequence ID" value="NP_689808.2"/>
</dbReference>
<dbReference type="UCSC" id="uc001zho.4">
    <property type="organism name" value="human"/>
</dbReference>
<dbReference type="AGR" id="HGNC:19401"/>
<dbReference type="CTD" id="161779"/>
<dbReference type="DisGeNET" id="161779"/>
<dbReference type="GeneCards" id="PGBD4"/>
<dbReference type="HGNC" id="HGNC:19401">
    <property type="gene designation" value="PGBD4"/>
</dbReference>
<dbReference type="HPA" id="ENSG00000182405">
    <property type="expression patterns" value="Tissue enhanced (skeletal)"/>
</dbReference>
<dbReference type="neXtProt" id="NX_Q96DM1"/>
<dbReference type="OpenTargets" id="ENSG00000182405"/>
<dbReference type="PharmGKB" id="PA134885912"/>
<dbReference type="VEuPathDB" id="HostDB:ENSG00000182405"/>
<dbReference type="eggNOG" id="ENOG502QWHD">
    <property type="taxonomic scope" value="Eukaryota"/>
</dbReference>
<dbReference type="GeneTree" id="ENSGT00940000164464"/>
<dbReference type="HOGENOM" id="CLU_013052_3_2_1"/>
<dbReference type="InParanoid" id="Q96DM1"/>
<dbReference type="OMA" id="SHINFRL"/>
<dbReference type="OrthoDB" id="5985989at2759"/>
<dbReference type="PAN-GO" id="Q96DM1">
    <property type="GO annotations" value="0 GO annotations based on evolutionary models"/>
</dbReference>
<dbReference type="PhylomeDB" id="Q96DM1"/>
<dbReference type="TreeFam" id="TF328011"/>
<dbReference type="PathwayCommons" id="Q96DM1"/>
<dbReference type="SignaLink" id="Q96DM1"/>
<dbReference type="BioGRID-ORCS" id="161779">
    <property type="hits" value="11 hits in 1157 CRISPR screens"/>
</dbReference>
<dbReference type="GenomeRNAi" id="161779"/>
<dbReference type="Pharos" id="Q96DM1">
    <property type="development level" value="Tdark"/>
</dbReference>
<dbReference type="PRO" id="PR:Q96DM1"/>
<dbReference type="Proteomes" id="UP000005640">
    <property type="component" value="Chromosome 15"/>
</dbReference>
<dbReference type="RNAct" id="Q96DM1">
    <property type="molecule type" value="protein"/>
</dbReference>
<dbReference type="Bgee" id="ENSG00000182405">
    <property type="expression patterns" value="Expressed in male germ line stem cell (sensu Vertebrata) in testis and 98 other cell types or tissues"/>
</dbReference>
<dbReference type="InterPro" id="IPR029526">
    <property type="entry name" value="PGBD"/>
</dbReference>
<dbReference type="InterPro" id="IPR032718">
    <property type="entry name" value="PGBD4_Znf_C"/>
</dbReference>
<dbReference type="PANTHER" id="PTHR46599">
    <property type="entry name" value="PIGGYBAC TRANSPOSABLE ELEMENT-DERIVED PROTEIN 4"/>
    <property type="match status" value="1"/>
</dbReference>
<dbReference type="PANTHER" id="PTHR46599:SF3">
    <property type="entry name" value="PIGGYBAC TRANSPOSABLE ELEMENT-DERIVED PROTEIN 4"/>
    <property type="match status" value="1"/>
</dbReference>
<dbReference type="Pfam" id="PF13843">
    <property type="entry name" value="DDE_Tnp_1_7"/>
    <property type="match status" value="1"/>
</dbReference>
<dbReference type="Pfam" id="PF13842">
    <property type="entry name" value="zf-Tnp_2"/>
    <property type="match status" value="1"/>
</dbReference>